<accession>Q2TXA7</accession>
<sequence length="1483" mass="166735">MASHKKSEDPLVVKDRQEQECESSDSTIASENASEHRSPMGLIDEDGIETLNRIASQSSRRRSSVYPPNVPTRTSTLATISENDPAVDPQGPSFDLNKWLKMVLRESERQGREAHRTGIVFKNFTVSGTGAALQLQDTVSSMLSAPFRIGEMMKNRHSPPKRILNEFNGLLKSGELLLVLGRPGSGCSTFLKSLCGELHGLSMSKESVIHYDGVPQQRMIKEFKGEVVYNQEVDKHFPHLTVGQTLEFAALARTPAQRIRDMSREEFAKHITQVVMAVFGLSHTYNTKVGNDFVRGVSGGERKRVSIAEMALAHSPLAAWDNSTRGLDSATALKFVEALRLFADLSGSAHAVAIYQASQSIYDIFNKVVVLYEGRQIYYGPAKDAKSYFERQGWECPQRQTTGDFLTSVTNPSERKARPGMENQVPRTAEDFEAYWRKSPEYQKLMSEISHYEQEHPLEEEGDALATFQQKKREIQAKHTRPQSPYLLSVPMQIKLNTKRAYQRVWNDISSTVSTVISQIIMALIIGSVFYGTPDATAGFTAKGATLFFAVLLNALIAMNEINSLYSQRPIVEKHNSYAFYHPATEAIAGVVSDIPVKFVIAVVFNLILYFLAGLHRSAGQFFLYLLVTFIVMFVMSAVFRTMAAITQTVSQAMGLAGILILALIVYTGFVLPVPSMHPWFEWIHYLNPIYYAFEMLIANEFHGRDFICSQFIPAYPNLSGNSFVCSSAGAKAGQRAISGDDYIQVNYQYSYGHVWRNFGILIAFLVGFMMIYFIATELNSSTSSTAEVLVFRRGHEPAYLRTDSKKPDAESAVELSAMKPTTESGEGDMSIIPPQKDIFTWRDVCYDIEIKGEPRRLLDHVSGWVKPGTLTALMGVSGAGKTTLLDVLAHRTSMGVITGDMFVNGRGLDQSFQRSTGYVQQQDLHLETATVRESLRFSALLRQPPNVSIQEKYDYVEDVIRMLKMEDFAEAVVGVPGQGLNVEQRKLLTIGVELAAKPKLLLFLDEPTSGLDSQSSWAICAFLRRLADSGQAVLCTIHQPSAILFQQFDQLLFLARGGKTVYFGPIGQNSNTLLNYFESNGARKCADDENPAEWMLEIVNAGTNSEGENWFDVWKRSSECQGVQTEIDRIHREQQSKTQASDKDNESWSKSEFAMPFWFQLYQVTYRVFQQYWRMPEYIASKWVLGILSGLFIGFSFFQAKSSLQGMQTIVYSLFMLCSIFSSLVQQVMPLFVTQRSLYEVRERPSKTYSWKAFLIANIIVEIPYQIMMGILTYACYYYAVVGVQDSERQGLVLLLCIQFFIYASTFAHMAIAAMPDTETASAIVVLLFAMSLTFCGVMQTPTALPGFWIFMYRVSPFTYWVSAMAATQLHDRVVQCSPSEMSIFDPPSGQTCGEYMSSFMSMAGGQLSNPNATSDCNYCSVAVADDFLSSVNIYWSERWRNFGLMWVYIVFNIFLATMLYYTFRVKKWNLSGLKERFSKKK</sequence>
<feature type="chain" id="PRO_0000449462" description="ABC multidrug transporter atrA">
    <location>
        <begin position="1"/>
        <end position="1483"/>
    </location>
</feature>
<feature type="transmembrane region" description="Helical" evidence="1">
    <location>
        <begin position="512"/>
        <end position="532"/>
    </location>
</feature>
<feature type="transmembrane region" description="Helical" evidence="1">
    <location>
        <begin position="539"/>
        <end position="559"/>
    </location>
</feature>
<feature type="transmembrane region" description="Helical" evidence="1">
    <location>
        <begin position="595"/>
        <end position="615"/>
    </location>
</feature>
<feature type="transmembrane region" description="Helical" evidence="1">
    <location>
        <begin position="620"/>
        <end position="640"/>
    </location>
</feature>
<feature type="transmembrane region" description="Helical" evidence="1">
    <location>
        <begin position="654"/>
        <end position="674"/>
    </location>
</feature>
<feature type="transmembrane region" description="Helical" evidence="1">
    <location>
        <begin position="759"/>
        <end position="779"/>
    </location>
</feature>
<feature type="transmembrane region" description="Helical" evidence="1">
    <location>
        <begin position="1179"/>
        <end position="1199"/>
    </location>
</feature>
<feature type="transmembrane region" description="Helical" evidence="1">
    <location>
        <begin position="1215"/>
        <end position="1235"/>
    </location>
</feature>
<feature type="transmembrane region" description="Helical" evidence="1">
    <location>
        <begin position="1254"/>
        <end position="1274"/>
    </location>
</feature>
<feature type="transmembrane region" description="Helical" evidence="1">
    <location>
        <begin position="1293"/>
        <end position="1313"/>
    </location>
</feature>
<feature type="transmembrane region" description="Helical" evidence="1">
    <location>
        <begin position="1320"/>
        <end position="1340"/>
    </location>
</feature>
<feature type="transmembrane region" description="Helical" evidence="1">
    <location>
        <begin position="1444"/>
        <end position="1464"/>
    </location>
</feature>
<feature type="domain" description="ABC transporter 1" evidence="2">
    <location>
        <begin position="147"/>
        <end position="398"/>
    </location>
</feature>
<feature type="domain" description="ABC transporter 2" evidence="2">
    <location>
        <begin position="840"/>
        <end position="1083"/>
    </location>
</feature>
<feature type="region of interest" description="Disordered" evidence="4">
    <location>
        <begin position="1"/>
        <end position="92"/>
    </location>
</feature>
<feature type="compositionally biased region" description="Basic and acidic residues" evidence="4">
    <location>
        <begin position="1"/>
        <end position="19"/>
    </location>
</feature>
<feature type="compositionally biased region" description="Polar residues" evidence="4">
    <location>
        <begin position="71"/>
        <end position="82"/>
    </location>
</feature>
<feature type="binding site" evidence="2">
    <location>
        <begin position="876"/>
        <end position="883"/>
    </location>
    <ligand>
        <name>ATP</name>
        <dbReference type="ChEBI" id="CHEBI:30616"/>
    </ligand>
</feature>
<feature type="glycosylation site" description="N-linked (GlcNAc...) asparagine" evidence="3">
    <location>
        <position position="32"/>
    </location>
</feature>
<feature type="glycosylation site" description="N-linked (GlcNAc...) asparagine" evidence="3">
    <location>
        <position position="123"/>
    </location>
</feature>
<feature type="glycosylation site" description="N-linked (GlcNAc...) asparagine" evidence="3">
    <location>
        <position position="322"/>
    </location>
</feature>
<feature type="glycosylation site" description="N-linked (GlcNAc...) asparagine" evidence="3">
    <location>
        <position position="718"/>
    </location>
</feature>
<feature type="glycosylation site" description="N-linked (GlcNAc...) asparagine" evidence="3">
    <location>
        <position position="780"/>
    </location>
</feature>
<feature type="glycosylation site" description="N-linked (GlcNAc...) asparagine" evidence="3">
    <location>
        <position position="947"/>
    </location>
</feature>
<feature type="glycosylation site" description="N-linked (GlcNAc...) asparagine" evidence="3">
    <location>
        <position position="1146"/>
    </location>
</feature>
<feature type="glycosylation site" description="N-linked (GlcNAc...) asparagine" evidence="3">
    <location>
        <position position="1413"/>
    </location>
</feature>
<feature type="glycosylation site" description="N-linked (GlcNAc...) asparagine" evidence="3">
    <location>
        <position position="1471"/>
    </location>
</feature>
<comment type="function">
    <text evidence="5">Pleiotropic ABC efflux transporter involved in the basal level of azole susceptibility (PubMed:30011258). Confers resistance to miconazole and clotrimazole (PubMed:30011258).</text>
</comment>
<comment type="catalytic activity">
    <reaction evidence="8">
        <text>(R)-miconazole(in) + ATP + H2O = (R)-miconazole(out) + ADP + phosphate + H(+)</text>
        <dbReference type="Rhea" id="RHEA:61928"/>
        <dbReference type="ChEBI" id="CHEBI:15377"/>
        <dbReference type="ChEBI" id="CHEBI:15378"/>
        <dbReference type="ChEBI" id="CHEBI:30616"/>
        <dbReference type="ChEBI" id="CHEBI:43474"/>
        <dbReference type="ChEBI" id="CHEBI:82894"/>
        <dbReference type="ChEBI" id="CHEBI:456216"/>
    </reaction>
    <physiologicalReaction direction="left-to-right" evidence="8">
        <dbReference type="Rhea" id="RHEA:61929"/>
    </physiologicalReaction>
</comment>
<comment type="subcellular location">
    <subcellularLocation>
        <location evidence="8">Cell membrane</location>
        <topology evidence="1">Multi-pass membrane protein</topology>
    </subcellularLocation>
</comment>
<comment type="induction">
    <text evidence="5">Expression is highly up-regulated in azole resistant strains and in the presence of miconazole.</text>
</comment>
<comment type="disruption phenotype">
    <text evidence="5">Leads to slight miconazole susceptibility.</text>
</comment>
<comment type="similarity">
    <text evidence="7">Belongs to the ABC transporter superfamily. ABCG family. PDR (TC 3.A.1.205) subfamily.</text>
</comment>
<evidence type="ECO:0000255" key="1"/>
<evidence type="ECO:0000255" key="2">
    <source>
        <dbReference type="PROSITE-ProRule" id="PRU00434"/>
    </source>
</evidence>
<evidence type="ECO:0000255" key="3">
    <source>
        <dbReference type="PROSITE-ProRule" id="PRU00498"/>
    </source>
</evidence>
<evidence type="ECO:0000256" key="4">
    <source>
        <dbReference type="SAM" id="MobiDB-lite"/>
    </source>
</evidence>
<evidence type="ECO:0000269" key="5">
    <source>
    </source>
</evidence>
<evidence type="ECO:0000303" key="6">
    <source>
    </source>
</evidence>
<evidence type="ECO:0000305" key="7"/>
<evidence type="ECO:0000305" key="8">
    <source>
    </source>
</evidence>
<gene>
    <name evidence="6" type="primary">atrA</name>
    <name type="ORF">AO090010000219</name>
</gene>
<reference key="1">
    <citation type="journal article" date="2005" name="Nature">
        <title>Genome sequencing and analysis of Aspergillus oryzae.</title>
        <authorList>
            <person name="Machida M."/>
            <person name="Asai K."/>
            <person name="Sano M."/>
            <person name="Tanaka T."/>
            <person name="Kumagai T."/>
            <person name="Terai G."/>
            <person name="Kusumoto K."/>
            <person name="Arima T."/>
            <person name="Akita O."/>
            <person name="Kashiwagi Y."/>
            <person name="Abe K."/>
            <person name="Gomi K."/>
            <person name="Horiuchi H."/>
            <person name="Kitamoto K."/>
            <person name="Kobayashi T."/>
            <person name="Takeuchi M."/>
            <person name="Denning D.W."/>
            <person name="Galagan J.E."/>
            <person name="Nierman W.C."/>
            <person name="Yu J."/>
            <person name="Archer D.B."/>
            <person name="Bennett J.W."/>
            <person name="Bhatnagar D."/>
            <person name="Cleveland T.E."/>
            <person name="Fedorova N.D."/>
            <person name="Gotoh O."/>
            <person name="Horikawa H."/>
            <person name="Hosoyama A."/>
            <person name="Ichinomiya M."/>
            <person name="Igarashi R."/>
            <person name="Iwashita K."/>
            <person name="Juvvadi P.R."/>
            <person name="Kato M."/>
            <person name="Kato Y."/>
            <person name="Kin T."/>
            <person name="Kokubun A."/>
            <person name="Maeda H."/>
            <person name="Maeyama N."/>
            <person name="Maruyama J."/>
            <person name="Nagasaki H."/>
            <person name="Nakajima T."/>
            <person name="Oda K."/>
            <person name="Okada K."/>
            <person name="Paulsen I."/>
            <person name="Sakamoto K."/>
            <person name="Sawano T."/>
            <person name="Takahashi M."/>
            <person name="Takase K."/>
            <person name="Terabayashi Y."/>
            <person name="Wortman J.R."/>
            <person name="Yamada O."/>
            <person name="Yamagata Y."/>
            <person name="Anazawa H."/>
            <person name="Hata Y."/>
            <person name="Koide Y."/>
            <person name="Komori T."/>
            <person name="Koyama Y."/>
            <person name="Minetoki T."/>
            <person name="Suharnan S."/>
            <person name="Tanaka A."/>
            <person name="Isono K."/>
            <person name="Kuhara S."/>
            <person name="Ogasawara N."/>
            <person name="Kikuchi H."/>
        </authorList>
    </citation>
    <scope>NUCLEOTIDE SEQUENCE [LARGE SCALE GENOMIC DNA]</scope>
    <source>
        <strain>ATCC 42149 / RIB 40</strain>
    </source>
</reference>
<reference key="2">
    <citation type="journal article" date="2018" name="Biosci. Biotechnol. Biochem.">
        <title>The PDR-type ABC transporters AtrA and AtrG are involved in azole drug resistance in Aspergillus oryzae.</title>
        <authorList>
            <person name="Miura D."/>
            <person name="Sugiyama K."/>
            <person name="Ito A."/>
            <person name="Ohba-Tanaka A."/>
            <person name="Tanaka M."/>
            <person name="Shintani T."/>
            <person name="Gomi K."/>
        </authorList>
    </citation>
    <scope>FUNCTION</scope>
    <scope>INDUCTION</scope>
    <scope>DISRUPTION PHENOTYPE</scope>
    <scope>CATALYTIC ACTIVITY</scope>
</reference>
<dbReference type="EMBL" id="BA000056">
    <property type="protein sequence ID" value="BAE66116.1"/>
    <property type="molecule type" value="Genomic_DNA"/>
</dbReference>
<dbReference type="RefSeq" id="XP_001827249.1">
    <property type="nucleotide sequence ID" value="XM_001827197.2"/>
</dbReference>
<dbReference type="SMR" id="Q2TXA7"/>
<dbReference type="GlyCosmos" id="Q2TXA7">
    <property type="glycosylation" value="9 sites, No reported glycans"/>
</dbReference>
<dbReference type="EnsemblFungi" id="BAE66116">
    <property type="protein sequence ID" value="BAE66116"/>
    <property type="gene ID" value="AO090010000219"/>
</dbReference>
<dbReference type="GeneID" id="5999383"/>
<dbReference type="KEGG" id="aor:AO090010000219"/>
<dbReference type="VEuPathDB" id="FungiDB:AO090010000219"/>
<dbReference type="HOGENOM" id="CLU_000604_35_0_1"/>
<dbReference type="OMA" id="SYIFAKF"/>
<dbReference type="OrthoDB" id="54814at5052"/>
<dbReference type="Proteomes" id="UP000006564">
    <property type="component" value="Chromosome 8"/>
</dbReference>
<dbReference type="GO" id="GO:0005886">
    <property type="term" value="C:plasma membrane"/>
    <property type="evidence" value="ECO:0007669"/>
    <property type="project" value="UniProtKB-SubCell"/>
</dbReference>
<dbReference type="GO" id="GO:0140359">
    <property type="term" value="F:ABC-type transporter activity"/>
    <property type="evidence" value="ECO:0007669"/>
    <property type="project" value="InterPro"/>
</dbReference>
<dbReference type="GO" id="GO:0005524">
    <property type="term" value="F:ATP binding"/>
    <property type="evidence" value="ECO:0007669"/>
    <property type="project" value="UniProtKB-KW"/>
</dbReference>
<dbReference type="GO" id="GO:0016887">
    <property type="term" value="F:ATP hydrolysis activity"/>
    <property type="evidence" value="ECO:0007669"/>
    <property type="project" value="InterPro"/>
</dbReference>
<dbReference type="CDD" id="cd03233">
    <property type="entry name" value="ABCG_PDR_domain1"/>
    <property type="match status" value="1"/>
</dbReference>
<dbReference type="CDD" id="cd03232">
    <property type="entry name" value="ABCG_PDR_domain2"/>
    <property type="match status" value="1"/>
</dbReference>
<dbReference type="FunFam" id="3.40.50.300:FF:001601">
    <property type="entry name" value="ABC multidrug transporter"/>
    <property type="match status" value="1"/>
</dbReference>
<dbReference type="FunFam" id="3.40.50.300:FF:000054">
    <property type="entry name" value="ABC multidrug transporter atrF"/>
    <property type="match status" value="1"/>
</dbReference>
<dbReference type="Gene3D" id="3.40.50.300">
    <property type="entry name" value="P-loop containing nucleotide triphosphate hydrolases"/>
    <property type="match status" value="2"/>
</dbReference>
<dbReference type="InterPro" id="IPR003593">
    <property type="entry name" value="AAA+_ATPase"/>
</dbReference>
<dbReference type="InterPro" id="IPR013525">
    <property type="entry name" value="ABC2_TM"/>
</dbReference>
<dbReference type="InterPro" id="IPR029481">
    <property type="entry name" value="ABC_trans_N"/>
</dbReference>
<dbReference type="InterPro" id="IPR003439">
    <property type="entry name" value="ABC_transporter-like_ATP-bd"/>
</dbReference>
<dbReference type="InterPro" id="IPR017871">
    <property type="entry name" value="ABC_transporter-like_CS"/>
</dbReference>
<dbReference type="InterPro" id="IPR043926">
    <property type="entry name" value="ABCG_dom"/>
</dbReference>
<dbReference type="InterPro" id="IPR034001">
    <property type="entry name" value="ABCG_PDR_1"/>
</dbReference>
<dbReference type="InterPro" id="IPR034003">
    <property type="entry name" value="ABCG_PDR_2"/>
</dbReference>
<dbReference type="InterPro" id="IPR027417">
    <property type="entry name" value="P-loop_NTPase"/>
</dbReference>
<dbReference type="InterPro" id="IPR010929">
    <property type="entry name" value="PDR_CDR_ABC"/>
</dbReference>
<dbReference type="PANTHER" id="PTHR19241">
    <property type="entry name" value="ATP-BINDING CASSETTE TRANSPORTER"/>
    <property type="match status" value="1"/>
</dbReference>
<dbReference type="Pfam" id="PF01061">
    <property type="entry name" value="ABC2_membrane"/>
    <property type="match status" value="2"/>
</dbReference>
<dbReference type="Pfam" id="PF19055">
    <property type="entry name" value="ABC2_membrane_7"/>
    <property type="match status" value="1"/>
</dbReference>
<dbReference type="Pfam" id="PF00005">
    <property type="entry name" value="ABC_tran"/>
    <property type="match status" value="2"/>
</dbReference>
<dbReference type="Pfam" id="PF14510">
    <property type="entry name" value="ABC_trans_N"/>
    <property type="match status" value="1"/>
</dbReference>
<dbReference type="Pfam" id="PF06422">
    <property type="entry name" value="PDR_CDR"/>
    <property type="match status" value="1"/>
</dbReference>
<dbReference type="SMART" id="SM00382">
    <property type="entry name" value="AAA"/>
    <property type="match status" value="2"/>
</dbReference>
<dbReference type="SUPFAM" id="SSF52540">
    <property type="entry name" value="P-loop containing nucleoside triphosphate hydrolases"/>
    <property type="match status" value="2"/>
</dbReference>
<dbReference type="PROSITE" id="PS00211">
    <property type="entry name" value="ABC_TRANSPORTER_1"/>
    <property type="match status" value="1"/>
</dbReference>
<dbReference type="PROSITE" id="PS50893">
    <property type="entry name" value="ABC_TRANSPORTER_2"/>
    <property type="match status" value="2"/>
</dbReference>
<protein>
    <recommendedName>
        <fullName>ABC multidrug transporter atrA</fullName>
    </recommendedName>
</protein>
<name>ATRA_ASPOR</name>
<keyword id="KW-0067">ATP-binding</keyword>
<keyword id="KW-1003">Cell membrane</keyword>
<keyword id="KW-0325">Glycoprotein</keyword>
<keyword id="KW-0472">Membrane</keyword>
<keyword id="KW-0547">Nucleotide-binding</keyword>
<keyword id="KW-1185">Reference proteome</keyword>
<keyword id="KW-0677">Repeat</keyword>
<keyword id="KW-0812">Transmembrane</keyword>
<keyword id="KW-1133">Transmembrane helix</keyword>
<keyword id="KW-0813">Transport</keyword>
<organism>
    <name type="scientific">Aspergillus oryzae (strain ATCC 42149 / RIB 40)</name>
    <name type="common">Yellow koji mold</name>
    <dbReference type="NCBI Taxonomy" id="510516"/>
    <lineage>
        <taxon>Eukaryota</taxon>
        <taxon>Fungi</taxon>
        <taxon>Dikarya</taxon>
        <taxon>Ascomycota</taxon>
        <taxon>Pezizomycotina</taxon>
        <taxon>Eurotiomycetes</taxon>
        <taxon>Eurotiomycetidae</taxon>
        <taxon>Eurotiales</taxon>
        <taxon>Aspergillaceae</taxon>
        <taxon>Aspergillus</taxon>
        <taxon>Aspergillus subgen. Circumdati</taxon>
    </lineage>
</organism>
<proteinExistence type="evidence at protein level"/>